<accession>F4HWL4</accession>
<accession>Q9SGN2</accession>
<comment type="function">
    <text evidence="3">Catalyzes the attachment of tyrosine to tRNA(Tyr) in a two-step reaction: tyrosine is first activated by ATP to form Tyr-AMP and then transferred to the acceptor end of tRNA(Tyr).</text>
</comment>
<comment type="catalytic activity">
    <reaction evidence="5">
        <text>tRNA(Tyr) + L-tyrosine + ATP = L-tyrosyl-tRNA(Tyr) + AMP + diphosphate + H(+)</text>
        <dbReference type="Rhea" id="RHEA:10220"/>
        <dbReference type="Rhea" id="RHEA-COMP:9706"/>
        <dbReference type="Rhea" id="RHEA-COMP:9707"/>
        <dbReference type="ChEBI" id="CHEBI:15378"/>
        <dbReference type="ChEBI" id="CHEBI:30616"/>
        <dbReference type="ChEBI" id="CHEBI:33019"/>
        <dbReference type="ChEBI" id="CHEBI:58315"/>
        <dbReference type="ChEBI" id="CHEBI:78442"/>
        <dbReference type="ChEBI" id="CHEBI:78536"/>
        <dbReference type="ChEBI" id="CHEBI:456215"/>
        <dbReference type="EC" id="6.1.1.1"/>
    </reaction>
</comment>
<comment type="subcellular location">
    <subcellularLocation>
        <location evidence="6 7">Cytoplasm</location>
        <location evidence="6 7">Cytosol</location>
    </subcellularLocation>
</comment>
<comment type="disruption phenotype">
    <text evidence="4">No visible phenotype under normal growth conditions.</text>
</comment>
<comment type="similarity">
    <text evidence="5">Belongs to the class-I aminoacyl-tRNA synthetase family.</text>
</comment>
<comment type="sequence caution" evidence="5">
    <conflict type="erroneous gene model prediction">
        <sequence resource="EMBL-CDS" id="AAF16759"/>
    </conflict>
</comment>
<keyword id="KW-0007">Acetylation</keyword>
<keyword id="KW-0030">Aminoacyl-tRNA synthetase</keyword>
<keyword id="KW-0067">ATP-binding</keyword>
<keyword id="KW-0963">Cytoplasm</keyword>
<keyword id="KW-0436">Ligase</keyword>
<keyword id="KW-0547">Nucleotide-binding</keyword>
<keyword id="KW-0648">Protein biosynthesis</keyword>
<keyword id="KW-1185">Reference proteome</keyword>
<reference key="1">
    <citation type="journal article" date="2000" name="Nature">
        <title>Sequence and analysis of chromosome 1 of the plant Arabidopsis thaliana.</title>
        <authorList>
            <person name="Theologis A."/>
            <person name="Ecker J.R."/>
            <person name="Palm C.J."/>
            <person name="Federspiel N.A."/>
            <person name="Kaul S."/>
            <person name="White O."/>
            <person name="Alonso J."/>
            <person name="Altafi H."/>
            <person name="Araujo R."/>
            <person name="Bowman C.L."/>
            <person name="Brooks S.Y."/>
            <person name="Buehler E."/>
            <person name="Chan A."/>
            <person name="Chao Q."/>
            <person name="Chen H."/>
            <person name="Cheuk R.F."/>
            <person name="Chin C.W."/>
            <person name="Chung M.K."/>
            <person name="Conn L."/>
            <person name="Conway A.B."/>
            <person name="Conway A.R."/>
            <person name="Creasy T.H."/>
            <person name="Dewar K."/>
            <person name="Dunn P."/>
            <person name="Etgu P."/>
            <person name="Feldblyum T.V."/>
            <person name="Feng J.-D."/>
            <person name="Fong B."/>
            <person name="Fujii C.Y."/>
            <person name="Gill J.E."/>
            <person name="Goldsmith A.D."/>
            <person name="Haas B."/>
            <person name="Hansen N.F."/>
            <person name="Hughes B."/>
            <person name="Huizar L."/>
            <person name="Hunter J.L."/>
            <person name="Jenkins J."/>
            <person name="Johnson-Hopson C."/>
            <person name="Khan S."/>
            <person name="Khaykin E."/>
            <person name="Kim C.J."/>
            <person name="Koo H.L."/>
            <person name="Kremenetskaia I."/>
            <person name="Kurtz D.B."/>
            <person name="Kwan A."/>
            <person name="Lam B."/>
            <person name="Langin-Hooper S."/>
            <person name="Lee A."/>
            <person name="Lee J.M."/>
            <person name="Lenz C.A."/>
            <person name="Li J.H."/>
            <person name="Li Y.-P."/>
            <person name="Lin X."/>
            <person name="Liu S.X."/>
            <person name="Liu Z.A."/>
            <person name="Luros J.S."/>
            <person name="Maiti R."/>
            <person name="Marziali A."/>
            <person name="Militscher J."/>
            <person name="Miranda M."/>
            <person name="Nguyen M."/>
            <person name="Nierman W.C."/>
            <person name="Osborne B.I."/>
            <person name="Pai G."/>
            <person name="Peterson J."/>
            <person name="Pham P.K."/>
            <person name="Rizzo M."/>
            <person name="Rooney T."/>
            <person name="Rowley D."/>
            <person name="Sakano H."/>
            <person name="Salzberg S.L."/>
            <person name="Schwartz J.R."/>
            <person name="Shinn P."/>
            <person name="Southwick A.M."/>
            <person name="Sun H."/>
            <person name="Tallon L.J."/>
            <person name="Tambunga G."/>
            <person name="Toriumi M.J."/>
            <person name="Town C.D."/>
            <person name="Utterback T."/>
            <person name="Van Aken S."/>
            <person name="Vaysberg M."/>
            <person name="Vysotskaia V.S."/>
            <person name="Walker M."/>
            <person name="Wu D."/>
            <person name="Yu G."/>
            <person name="Fraser C.M."/>
            <person name="Venter J.C."/>
            <person name="Davis R.W."/>
        </authorList>
    </citation>
    <scope>NUCLEOTIDE SEQUENCE [LARGE SCALE GENOMIC DNA]</scope>
    <source>
        <strain>cv. Columbia</strain>
    </source>
</reference>
<reference key="2">
    <citation type="journal article" date="2017" name="Plant J.">
        <title>Araport11: a complete reannotation of the Arabidopsis thaliana reference genome.</title>
        <authorList>
            <person name="Cheng C.Y."/>
            <person name="Krishnakumar V."/>
            <person name="Chan A.P."/>
            <person name="Thibaud-Nissen F."/>
            <person name="Schobel S."/>
            <person name="Town C.D."/>
        </authorList>
    </citation>
    <scope>GENOME REANNOTATION</scope>
    <source>
        <strain>cv. Columbia</strain>
    </source>
</reference>
<reference key="3">
    <citation type="journal article" date="2005" name="Plant J.">
        <title>Requirement of aminoacyl-tRNA synthetases for gametogenesis and embryo development in Arabidopsis.</title>
        <authorList>
            <person name="Berg M."/>
            <person name="Rogers R."/>
            <person name="Muralla R."/>
            <person name="Meinke D."/>
        </authorList>
    </citation>
    <scope>SUBCELLULAR LOCATION</scope>
    <scope>DISRUPTION PHENOTYPE</scope>
</reference>
<reference key="4">
    <citation type="journal article" date="2005" name="Proc. Natl. Acad. Sci. U.S.A.">
        <title>Dual targeting is the rule for organellar aminoacyl-tRNA synthetases in Arabidopsis thaliana.</title>
        <authorList>
            <person name="Duchene A.-M."/>
            <person name="Giritch A."/>
            <person name="Hoffmann B."/>
            <person name="Cognat V."/>
            <person name="Lancelin D."/>
            <person name="Peeters N.M."/>
            <person name="Zaepfel M."/>
            <person name="Marechal-Drouard L."/>
            <person name="Small I.D."/>
        </authorList>
    </citation>
    <scope>SUBCELLULAR LOCATION</scope>
</reference>
<reference key="5">
    <citation type="journal article" date="2012" name="Mol. Cell. Proteomics">
        <title>Comparative large-scale characterisation of plant vs. mammal proteins reveals similar and idiosyncratic N-alpha acetylation features.</title>
        <authorList>
            <person name="Bienvenut W.V."/>
            <person name="Sumpton D."/>
            <person name="Martinez A."/>
            <person name="Lilla S."/>
            <person name="Espagne C."/>
            <person name="Meinnel T."/>
            <person name="Giglione C."/>
        </authorList>
    </citation>
    <scope>ACETYLATION [LARGE SCALE ANALYSIS] AT MET-1</scope>
    <scope>IDENTIFICATION BY MASS SPECTROMETRY [LARGE SCALE ANALYSIS]</scope>
</reference>
<dbReference type="EC" id="6.1.1.1" evidence="5"/>
<dbReference type="EMBL" id="AC010155">
    <property type="protein sequence ID" value="AAF16759.1"/>
    <property type="status" value="ALT_SEQ"/>
    <property type="molecule type" value="Genomic_DNA"/>
</dbReference>
<dbReference type="EMBL" id="CP002684">
    <property type="protein sequence ID" value="AEE30961.1"/>
    <property type="molecule type" value="Genomic_DNA"/>
</dbReference>
<dbReference type="EMBL" id="CP002684">
    <property type="protein sequence ID" value="ANM58265.1"/>
    <property type="molecule type" value="Genomic_DNA"/>
</dbReference>
<dbReference type="PIR" id="A86410">
    <property type="entry name" value="A86410"/>
</dbReference>
<dbReference type="RefSeq" id="NP_001319097.1">
    <property type="nucleotide sequence ID" value="NM_001332810.1"/>
</dbReference>
<dbReference type="RefSeq" id="NP_174157.4">
    <property type="nucleotide sequence ID" value="NM_102601.6"/>
</dbReference>
<dbReference type="SMR" id="F4HWL4"/>
<dbReference type="FunCoup" id="F4HWL4">
    <property type="interactions" value="3966"/>
</dbReference>
<dbReference type="STRING" id="3702.F4HWL4"/>
<dbReference type="iPTMnet" id="F4HWL4"/>
<dbReference type="PaxDb" id="3702-AT1G28350.1"/>
<dbReference type="ProteomicsDB" id="245301"/>
<dbReference type="EnsemblPlants" id="AT1G28350.1">
    <property type="protein sequence ID" value="AT1G28350.1"/>
    <property type="gene ID" value="AT1G28350"/>
</dbReference>
<dbReference type="EnsemblPlants" id="AT1G28350.2">
    <property type="protein sequence ID" value="AT1G28350.2"/>
    <property type="gene ID" value="AT1G28350"/>
</dbReference>
<dbReference type="GeneID" id="839731"/>
<dbReference type="Gramene" id="AT1G28350.1">
    <property type="protein sequence ID" value="AT1G28350.1"/>
    <property type="gene ID" value="AT1G28350"/>
</dbReference>
<dbReference type="Gramene" id="AT1G28350.2">
    <property type="protein sequence ID" value="AT1G28350.2"/>
    <property type="gene ID" value="AT1G28350"/>
</dbReference>
<dbReference type="KEGG" id="ath:AT1G28350"/>
<dbReference type="Araport" id="AT1G28350"/>
<dbReference type="TAIR" id="AT1G28350"/>
<dbReference type="eggNOG" id="KOG2144">
    <property type="taxonomic scope" value="Eukaryota"/>
</dbReference>
<dbReference type="HOGENOM" id="CLU_010604_0_0_1"/>
<dbReference type="InParanoid" id="F4HWL4"/>
<dbReference type="OMA" id="CIHDDEL"/>
<dbReference type="PRO" id="PR:F4HWL4"/>
<dbReference type="Proteomes" id="UP000006548">
    <property type="component" value="Chromosome 1"/>
</dbReference>
<dbReference type="ExpressionAtlas" id="F4HWL4">
    <property type="expression patterns" value="baseline and differential"/>
</dbReference>
<dbReference type="GO" id="GO:0005829">
    <property type="term" value="C:cytosol"/>
    <property type="evidence" value="ECO:0007669"/>
    <property type="project" value="UniProtKB-SubCell"/>
</dbReference>
<dbReference type="GO" id="GO:0005524">
    <property type="term" value="F:ATP binding"/>
    <property type="evidence" value="ECO:0007669"/>
    <property type="project" value="UniProtKB-KW"/>
</dbReference>
<dbReference type="GO" id="GO:0004831">
    <property type="term" value="F:tyrosine-tRNA ligase activity"/>
    <property type="evidence" value="ECO:0007669"/>
    <property type="project" value="UniProtKB-EC"/>
</dbReference>
<dbReference type="GO" id="GO:0006418">
    <property type="term" value="P:tRNA aminoacylation for protein translation"/>
    <property type="evidence" value="ECO:0007669"/>
    <property type="project" value="InterPro"/>
</dbReference>
<dbReference type="FunFam" id="3.40.50.620:FF:000085">
    <property type="entry name" value="Tyrosine--tRNA ligase 1 cytoplasmic"/>
    <property type="match status" value="2"/>
</dbReference>
<dbReference type="FunFam" id="3.40.50.620:FF:000103">
    <property type="entry name" value="tyrosine--tRNA ligase 1, cytoplasmic"/>
    <property type="match status" value="2"/>
</dbReference>
<dbReference type="Gene3D" id="3.40.50.620">
    <property type="entry name" value="HUPs"/>
    <property type="match status" value="4"/>
</dbReference>
<dbReference type="InterPro" id="IPR002305">
    <property type="entry name" value="aa-tRNA-synth_Ic"/>
</dbReference>
<dbReference type="InterPro" id="IPR014729">
    <property type="entry name" value="Rossmann-like_a/b/a_fold"/>
</dbReference>
<dbReference type="InterPro" id="IPR050489">
    <property type="entry name" value="Tyr-tRNA_synthase"/>
</dbReference>
<dbReference type="NCBIfam" id="NF006330">
    <property type="entry name" value="PRK08560.1"/>
    <property type="match status" value="2"/>
</dbReference>
<dbReference type="PANTHER" id="PTHR46264:SF4">
    <property type="entry name" value="TYROSINE--TRNA LIGASE, CYTOPLASMIC"/>
    <property type="match status" value="1"/>
</dbReference>
<dbReference type="PANTHER" id="PTHR46264">
    <property type="entry name" value="TYROSINE-TRNA LIGASE"/>
    <property type="match status" value="1"/>
</dbReference>
<dbReference type="Pfam" id="PF00579">
    <property type="entry name" value="tRNA-synt_1b"/>
    <property type="match status" value="2"/>
</dbReference>
<dbReference type="SUPFAM" id="SSF52374">
    <property type="entry name" value="Nucleotidylyl transferase"/>
    <property type="match status" value="2"/>
</dbReference>
<gene>
    <name evidence="8" type="ordered locus">At1g28350</name>
    <name evidence="9" type="ORF">F3M18.22</name>
</gene>
<protein>
    <recommendedName>
        <fullName evidence="5">Tyrosine--tRNA ligase 2, cytoplasmic</fullName>
        <ecNumber evidence="5">6.1.1.1</ecNumber>
    </recommendedName>
    <alternativeName>
        <fullName evidence="5">Tyrosyl-tRNA synthetase</fullName>
        <shortName evidence="5">TyrRS</shortName>
    </alternativeName>
</protein>
<sequence length="748" mass="84717">MEALSINAPTQASTLPSGLQISKEVEKRYNVVRSVGEQCIHDDELKDLLAKKAAPVCYDGFEPSGRMHIAQGLMKIMNVNKLTSAGCRVKIWIADWFAYMNNKLGGDLKKIRVVGEYFKEIFQAAGMNSENVEFLWSSDEINAKGDEYWPLVMDIACRNSLAQIKRCMPIMGLSENEELSAAHILYVCMQCADTFFLEADICQLGMDQQTVNLLARDYCDVVKRENKPVILSHHMLPGLQQGQKKMSKSDPSSAIFMEDEEAEVNVKIKKAYCPPDIVEGNPCLEYVKHIILPWFSEFTVERDEKYGGNRTFKSFEDITTDYESGQLHPKDLKDALSKALNKILQPVRDHFKTNSRAKNLLKQVKGYKVTRVIPTASSTKEEDLSINTSASSSAAGLQMSEEAEMKYKIVRSIGEECIQEDELKNLLAKKPAPICYDGFEPSGRMHIAQGVMKVTNVNKLTSAGCQVKIWIADWFAQLNNKLGGDLERIRVVGEYFKEIWQAGGMNNDKVEFLWASDEINGKGSKYWPLVMDIARRNNLRRILRCGQIMGRSETEVLSAAQILYPCMQCADIFLLEADICQLGMDQRKVNMLAREYCADIKRKNKPIILSHHMLPGLQQGQEKMSKSDPSSAIFMEDEEADVNEKISKAYCPPKTVEGNPCLEYVKYIVLPRFNEFKVESEKNGGNKTFNSFEDIVADYETGELHPEDLKKALMKALNITLQPVRDHFKTNERAKNLLEQVKAFRVTR</sequence>
<evidence type="ECO:0000250" key="1"/>
<evidence type="ECO:0000250" key="2">
    <source>
        <dbReference type="UniProtKB" id="P54577"/>
    </source>
</evidence>
<evidence type="ECO:0000250" key="3">
    <source>
        <dbReference type="UniProtKB" id="Q9Y2Z4"/>
    </source>
</evidence>
<evidence type="ECO:0000269" key="4">
    <source>
    </source>
</evidence>
<evidence type="ECO:0000305" key="5"/>
<evidence type="ECO:0000305" key="6">
    <source>
    </source>
</evidence>
<evidence type="ECO:0000305" key="7">
    <source>
    </source>
</evidence>
<evidence type="ECO:0000312" key="8">
    <source>
        <dbReference type="Araport" id="AT1G28350"/>
    </source>
</evidence>
<evidence type="ECO:0000312" key="9">
    <source>
        <dbReference type="EMBL" id="AAF16759.1"/>
    </source>
</evidence>
<evidence type="ECO:0007744" key="10">
    <source>
    </source>
</evidence>
<proteinExistence type="evidence at protein level"/>
<organism>
    <name type="scientific">Arabidopsis thaliana</name>
    <name type="common">Mouse-ear cress</name>
    <dbReference type="NCBI Taxonomy" id="3702"/>
    <lineage>
        <taxon>Eukaryota</taxon>
        <taxon>Viridiplantae</taxon>
        <taxon>Streptophyta</taxon>
        <taxon>Embryophyta</taxon>
        <taxon>Tracheophyta</taxon>
        <taxon>Spermatophyta</taxon>
        <taxon>Magnoliopsida</taxon>
        <taxon>eudicotyledons</taxon>
        <taxon>Gunneridae</taxon>
        <taxon>Pentapetalae</taxon>
        <taxon>rosids</taxon>
        <taxon>malvids</taxon>
        <taxon>Brassicales</taxon>
        <taxon>Brassicaceae</taxon>
        <taxon>Camelineae</taxon>
        <taxon>Arabidopsis</taxon>
    </lineage>
</organism>
<feature type="chain" id="PRO_0000433554" description="Tyrosine--tRNA ligase 2, cytoplasmic">
    <location>
        <begin position="1"/>
        <end position="748"/>
    </location>
</feature>
<feature type="short sequence motif" description="'HIGH' region" evidence="5">
    <location>
        <begin position="441"/>
        <end position="449"/>
    </location>
</feature>
<feature type="short sequence motif" description="'KMSKS' region" evidence="5">
    <location>
        <begin position="623"/>
        <end position="627"/>
    </location>
</feature>
<feature type="binding site" evidence="2">
    <location>
        <position position="564"/>
    </location>
    <ligand>
        <name>L-tyrosine</name>
        <dbReference type="ChEBI" id="CHEBI:58315"/>
    </ligand>
</feature>
<feature type="binding site" evidence="2">
    <location>
        <position position="568"/>
    </location>
    <ligand>
        <name>L-tyrosine</name>
        <dbReference type="ChEBI" id="CHEBI:58315"/>
    </ligand>
</feature>
<feature type="binding site" evidence="2">
    <location>
        <position position="571"/>
    </location>
    <ligand>
        <name>L-tyrosine</name>
        <dbReference type="ChEBI" id="CHEBI:58315"/>
    </ligand>
</feature>
<feature type="binding site" evidence="2">
    <location>
        <position position="586"/>
    </location>
    <ligand>
        <name>L-tyrosine</name>
        <dbReference type="ChEBI" id="CHEBI:58315"/>
    </ligand>
</feature>
<feature type="binding site" evidence="1">
    <location>
        <position position="626"/>
    </location>
    <ligand>
        <name>ATP</name>
        <dbReference type="ChEBI" id="CHEBI:30616"/>
    </ligand>
</feature>
<feature type="modified residue" description="N-acetylmethionine" evidence="10">
    <location>
        <position position="1"/>
    </location>
</feature>
<name>SYYC2_ARATH</name>